<name>CARB_STRGC</name>
<proteinExistence type="inferred from homology"/>
<evidence type="ECO:0000255" key="1">
    <source>
        <dbReference type="HAMAP-Rule" id="MF_01210"/>
    </source>
</evidence>
<accession>A8AX83</accession>
<protein>
    <recommendedName>
        <fullName evidence="1">Carbamoyl phosphate synthase large chain</fullName>
        <ecNumber evidence="1">6.3.4.16</ecNumber>
        <ecNumber evidence="1">6.3.5.5</ecNumber>
    </recommendedName>
    <alternativeName>
        <fullName evidence="1">Carbamoyl phosphate synthetase ammonia chain</fullName>
    </alternativeName>
</protein>
<keyword id="KW-0028">Amino-acid biosynthesis</keyword>
<keyword id="KW-0055">Arginine biosynthesis</keyword>
<keyword id="KW-0067">ATP-binding</keyword>
<keyword id="KW-0436">Ligase</keyword>
<keyword id="KW-0460">Magnesium</keyword>
<keyword id="KW-0464">Manganese</keyword>
<keyword id="KW-0479">Metal-binding</keyword>
<keyword id="KW-0547">Nucleotide-binding</keyword>
<keyword id="KW-0665">Pyrimidine biosynthesis</keyword>
<keyword id="KW-1185">Reference proteome</keyword>
<keyword id="KW-0677">Repeat</keyword>
<reference key="1">
    <citation type="journal article" date="2007" name="J. Bacteriol.">
        <title>Genome-wide transcriptional changes in Streptococcus gordonii in response to competence signaling peptide.</title>
        <authorList>
            <person name="Vickerman M.M."/>
            <person name="Iobst S."/>
            <person name="Jesionowski A.M."/>
            <person name="Gill S.R."/>
        </authorList>
    </citation>
    <scope>NUCLEOTIDE SEQUENCE [LARGE SCALE GENOMIC DNA]</scope>
    <source>
        <strain>Challis / ATCC 35105 / BCRC 15272 / CH1 / DL1 / V288</strain>
    </source>
</reference>
<sequence length="1059" mass="116480">MPKRKDIQKIMVIGSGPIVIGQAAEFDYAGTQACLSLKEEGYSVVLVNSNPATIMTDKEIADRVYIEPITLEFVARILRKERPDALLPTLGGQTGLNMAMELSKSGLLEELGVELLGTKLSAIDQAEDRDLFKQLMEELGQPIPESEIVNTVDEALEFAAGIGYPVIVRPAFTLGGTGGGICSNEGELQEIAENGLKISPVTQCLIERSIAGFKEIEYEVMRDGADNALVVCNMENFDPVGIHTGDSIVFAPSQTISDYEYQMLRDASLKIIRALKIEGGCNVQLALDPNSFKYYVIEVNPRVSRSSALASKATGYPIAKLAAKIAVGLTLDEIINPVTGSTYAMFEPALDYVVAKIPRFPFDKFEHGERRLGTQMKATGEVMAIGRNIEESLLKACRSLEVGVDHNELPALSQVSDDELMRKIVKVQDDRLFYISEAIRRGYSPDEIAELTKIDVFFLDKLLHIYEIEQELASHIGDSYVLKKAKQNGFADTKIATLWDMTAQQVRRIRQDQKIMPVYKMVDTCAAEFESATPYFYSTYGFENESVKSSKESVLVLGSGPIRIGQGVEFDYATVHSVKAIQAAGYEAIIMNSNPETVSTDFSVSDKLYFEPLTFEDVMNVIDLEQPKGVIVQFGGQTAINLAEPLSKAGVKILGTQVADLDRAEDRDLFEQALKELDIPQPPGQTATNEEEAIEAARKIGFPVLVRPSYVLGGRAMEIVENEADLRSYMRTAVKASPDHPVLVDSYIVGDECEVDAISDGRQVLIPGIMEHIERAGVHSGDSMAAYPPQTLSQKVKDTIADYTKRLALGLNCIGMMNIQFVIKDEQVYVIEVNPRASRTVPFLSKVTDIPMAQVATRLILGETLAELDYEDGLHPESFMVHIKAPVFSFSKLAKVDSLLGPEMKSTGEVMGSDRTLEKALYKAFEASYLHLPNFGNVVFTIADDSKEEALQLAQRFANIGYGIWATKGTASYFENHGLHVRLVEKIGSDDDKDIPAYIRKGKIQAIINTVGTKRTADKHGQIIRSSAIEHGVPLFTALDTADAMLKVLESRSFTTEAI</sequence>
<gene>
    <name evidence="1" type="primary">carB</name>
    <name type="ordered locus">SGO_1104</name>
</gene>
<dbReference type="EC" id="6.3.4.16" evidence="1"/>
<dbReference type="EC" id="6.3.5.5" evidence="1"/>
<dbReference type="EMBL" id="CP000725">
    <property type="protein sequence ID" value="ABV09710.1"/>
    <property type="molecule type" value="Genomic_DNA"/>
</dbReference>
<dbReference type="RefSeq" id="WP_012000515.1">
    <property type="nucleotide sequence ID" value="NC_009785.1"/>
</dbReference>
<dbReference type="SMR" id="A8AX83"/>
<dbReference type="STRING" id="467705.SGO_1104"/>
<dbReference type="KEGG" id="sgo:SGO_1104"/>
<dbReference type="eggNOG" id="COG0458">
    <property type="taxonomic scope" value="Bacteria"/>
</dbReference>
<dbReference type="HOGENOM" id="CLU_000513_1_0_9"/>
<dbReference type="UniPathway" id="UPA00068">
    <property type="reaction ID" value="UER00171"/>
</dbReference>
<dbReference type="UniPathway" id="UPA00070">
    <property type="reaction ID" value="UER00115"/>
</dbReference>
<dbReference type="Proteomes" id="UP000001131">
    <property type="component" value="Chromosome"/>
</dbReference>
<dbReference type="GO" id="GO:0005737">
    <property type="term" value="C:cytoplasm"/>
    <property type="evidence" value="ECO:0007669"/>
    <property type="project" value="TreeGrafter"/>
</dbReference>
<dbReference type="GO" id="GO:0005524">
    <property type="term" value="F:ATP binding"/>
    <property type="evidence" value="ECO:0007669"/>
    <property type="project" value="UniProtKB-UniRule"/>
</dbReference>
<dbReference type="GO" id="GO:0004087">
    <property type="term" value="F:carbamoyl-phosphate synthase (ammonia) activity"/>
    <property type="evidence" value="ECO:0007669"/>
    <property type="project" value="RHEA"/>
</dbReference>
<dbReference type="GO" id="GO:0004088">
    <property type="term" value="F:carbamoyl-phosphate synthase (glutamine-hydrolyzing) activity"/>
    <property type="evidence" value="ECO:0007669"/>
    <property type="project" value="UniProtKB-UniRule"/>
</dbReference>
<dbReference type="GO" id="GO:0046872">
    <property type="term" value="F:metal ion binding"/>
    <property type="evidence" value="ECO:0007669"/>
    <property type="project" value="UniProtKB-KW"/>
</dbReference>
<dbReference type="GO" id="GO:0044205">
    <property type="term" value="P:'de novo' UMP biosynthetic process"/>
    <property type="evidence" value="ECO:0007669"/>
    <property type="project" value="UniProtKB-UniRule"/>
</dbReference>
<dbReference type="GO" id="GO:0006541">
    <property type="term" value="P:glutamine metabolic process"/>
    <property type="evidence" value="ECO:0007669"/>
    <property type="project" value="TreeGrafter"/>
</dbReference>
<dbReference type="GO" id="GO:0006526">
    <property type="term" value="P:L-arginine biosynthetic process"/>
    <property type="evidence" value="ECO:0007669"/>
    <property type="project" value="UniProtKB-UniRule"/>
</dbReference>
<dbReference type="CDD" id="cd01424">
    <property type="entry name" value="MGS_CPS_II"/>
    <property type="match status" value="1"/>
</dbReference>
<dbReference type="FunFam" id="1.10.1030.10:FF:000002">
    <property type="entry name" value="Carbamoyl-phosphate synthase large chain"/>
    <property type="match status" value="1"/>
</dbReference>
<dbReference type="FunFam" id="3.30.1490.20:FF:000001">
    <property type="entry name" value="Carbamoyl-phosphate synthase large chain"/>
    <property type="match status" value="1"/>
</dbReference>
<dbReference type="FunFam" id="3.30.470.20:FF:000001">
    <property type="entry name" value="Carbamoyl-phosphate synthase large chain"/>
    <property type="match status" value="1"/>
</dbReference>
<dbReference type="FunFam" id="3.30.470.20:FF:000026">
    <property type="entry name" value="Carbamoyl-phosphate synthase large chain"/>
    <property type="match status" value="1"/>
</dbReference>
<dbReference type="FunFam" id="3.40.50.20:FF:000001">
    <property type="entry name" value="Carbamoyl-phosphate synthase large chain"/>
    <property type="match status" value="2"/>
</dbReference>
<dbReference type="Gene3D" id="3.40.50.20">
    <property type="match status" value="2"/>
</dbReference>
<dbReference type="Gene3D" id="3.30.1490.20">
    <property type="entry name" value="ATP-grasp fold, A domain"/>
    <property type="match status" value="1"/>
</dbReference>
<dbReference type="Gene3D" id="3.30.470.20">
    <property type="entry name" value="ATP-grasp fold, B domain"/>
    <property type="match status" value="2"/>
</dbReference>
<dbReference type="Gene3D" id="1.10.1030.10">
    <property type="entry name" value="Carbamoyl-phosphate synthetase, large subunit oligomerisation domain"/>
    <property type="match status" value="1"/>
</dbReference>
<dbReference type="Gene3D" id="3.40.50.1380">
    <property type="entry name" value="Methylglyoxal synthase-like domain"/>
    <property type="match status" value="1"/>
</dbReference>
<dbReference type="HAMAP" id="MF_01210_A">
    <property type="entry name" value="CPSase_L_chain_A"/>
    <property type="match status" value="1"/>
</dbReference>
<dbReference type="HAMAP" id="MF_01210_B">
    <property type="entry name" value="CPSase_L_chain_B"/>
    <property type="match status" value="1"/>
</dbReference>
<dbReference type="InterPro" id="IPR011761">
    <property type="entry name" value="ATP-grasp"/>
</dbReference>
<dbReference type="InterPro" id="IPR013815">
    <property type="entry name" value="ATP_grasp_subdomain_1"/>
</dbReference>
<dbReference type="InterPro" id="IPR006275">
    <property type="entry name" value="CarbamoylP_synth_lsu"/>
</dbReference>
<dbReference type="InterPro" id="IPR005480">
    <property type="entry name" value="CarbamoylP_synth_lsu_oligo"/>
</dbReference>
<dbReference type="InterPro" id="IPR036897">
    <property type="entry name" value="CarbamoylP_synth_lsu_oligo_sf"/>
</dbReference>
<dbReference type="InterPro" id="IPR005479">
    <property type="entry name" value="CbamoylP_synth_lsu-like_ATP-bd"/>
</dbReference>
<dbReference type="InterPro" id="IPR005483">
    <property type="entry name" value="CbamoylP_synth_lsu_CPSase_dom"/>
</dbReference>
<dbReference type="InterPro" id="IPR011607">
    <property type="entry name" value="MGS-like_dom"/>
</dbReference>
<dbReference type="InterPro" id="IPR036914">
    <property type="entry name" value="MGS-like_dom_sf"/>
</dbReference>
<dbReference type="InterPro" id="IPR033937">
    <property type="entry name" value="MGS_CPS_CarB"/>
</dbReference>
<dbReference type="InterPro" id="IPR016185">
    <property type="entry name" value="PreATP-grasp_dom_sf"/>
</dbReference>
<dbReference type="NCBIfam" id="TIGR01369">
    <property type="entry name" value="CPSaseII_lrg"/>
    <property type="match status" value="1"/>
</dbReference>
<dbReference type="NCBIfam" id="NF003671">
    <property type="entry name" value="PRK05294.1"/>
    <property type="match status" value="1"/>
</dbReference>
<dbReference type="NCBIfam" id="NF009455">
    <property type="entry name" value="PRK12815.1"/>
    <property type="match status" value="1"/>
</dbReference>
<dbReference type="PANTHER" id="PTHR11405:SF53">
    <property type="entry name" value="CARBAMOYL-PHOSPHATE SYNTHASE [AMMONIA], MITOCHONDRIAL"/>
    <property type="match status" value="1"/>
</dbReference>
<dbReference type="PANTHER" id="PTHR11405">
    <property type="entry name" value="CARBAMOYLTRANSFERASE FAMILY MEMBER"/>
    <property type="match status" value="1"/>
</dbReference>
<dbReference type="Pfam" id="PF02786">
    <property type="entry name" value="CPSase_L_D2"/>
    <property type="match status" value="2"/>
</dbReference>
<dbReference type="Pfam" id="PF02787">
    <property type="entry name" value="CPSase_L_D3"/>
    <property type="match status" value="1"/>
</dbReference>
<dbReference type="Pfam" id="PF02142">
    <property type="entry name" value="MGS"/>
    <property type="match status" value="1"/>
</dbReference>
<dbReference type="PRINTS" id="PR00098">
    <property type="entry name" value="CPSASE"/>
</dbReference>
<dbReference type="SMART" id="SM01096">
    <property type="entry name" value="CPSase_L_D3"/>
    <property type="match status" value="1"/>
</dbReference>
<dbReference type="SMART" id="SM01209">
    <property type="entry name" value="GARS_A"/>
    <property type="match status" value="1"/>
</dbReference>
<dbReference type="SMART" id="SM00851">
    <property type="entry name" value="MGS"/>
    <property type="match status" value="1"/>
</dbReference>
<dbReference type="SUPFAM" id="SSF48108">
    <property type="entry name" value="Carbamoyl phosphate synthetase, large subunit connection domain"/>
    <property type="match status" value="1"/>
</dbReference>
<dbReference type="SUPFAM" id="SSF56059">
    <property type="entry name" value="Glutathione synthetase ATP-binding domain-like"/>
    <property type="match status" value="2"/>
</dbReference>
<dbReference type="SUPFAM" id="SSF52335">
    <property type="entry name" value="Methylglyoxal synthase-like"/>
    <property type="match status" value="1"/>
</dbReference>
<dbReference type="SUPFAM" id="SSF52440">
    <property type="entry name" value="PreATP-grasp domain"/>
    <property type="match status" value="2"/>
</dbReference>
<dbReference type="PROSITE" id="PS50975">
    <property type="entry name" value="ATP_GRASP"/>
    <property type="match status" value="2"/>
</dbReference>
<dbReference type="PROSITE" id="PS00866">
    <property type="entry name" value="CPSASE_1"/>
    <property type="match status" value="2"/>
</dbReference>
<dbReference type="PROSITE" id="PS00867">
    <property type="entry name" value="CPSASE_2"/>
    <property type="match status" value="2"/>
</dbReference>
<dbReference type="PROSITE" id="PS51855">
    <property type="entry name" value="MGS"/>
    <property type="match status" value="1"/>
</dbReference>
<comment type="function">
    <text evidence="1">Large subunit of the glutamine-dependent carbamoyl phosphate synthetase (CPSase). CPSase catalyzes the formation of carbamoyl phosphate from the ammonia moiety of glutamine, carbonate, and phosphate donated by ATP, constituting the first step of 2 biosynthetic pathways, one leading to arginine and/or urea and the other to pyrimidine nucleotides. The large subunit (synthetase) binds the substrates ammonia (free or transferred from glutamine from the small subunit), hydrogencarbonate and ATP and carries out an ATP-coupled ligase reaction, activating hydrogencarbonate by forming carboxy phosphate which reacts with ammonia to form carbamoyl phosphate.</text>
</comment>
<comment type="catalytic activity">
    <reaction evidence="1">
        <text>hydrogencarbonate + L-glutamine + 2 ATP + H2O = carbamoyl phosphate + L-glutamate + 2 ADP + phosphate + 2 H(+)</text>
        <dbReference type="Rhea" id="RHEA:18633"/>
        <dbReference type="ChEBI" id="CHEBI:15377"/>
        <dbReference type="ChEBI" id="CHEBI:15378"/>
        <dbReference type="ChEBI" id="CHEBI:17544"/>
        <dbReference type="ChEBI" id="CHEBI:29985"/>
        <dbReference type="ChEBI" id="CHEBI:30616"/>
        <dbReference type="ChEBI" id="CHEBI:43474"/>
        <dbReference type="ChEBI" id="CHEBI:58228"/>
        <dbReference type="ChEBI" id="CHEBI:58359"/>
        <dbReference type="ChEBI" id="CHEBI:456216"/>
        <dbReference type="EC" id="6.3.5.5"/>
    </reaction>
</comment>
<comment type="catalytic activity">
    <molecule>Carbamoyl phosphate synthase large chain</molecule>
    <reaction evidence="1">
        <text>hydrogencarbonate + NH4(+) + 2 ATP = carbamoyl phosphate + 2 ADP + phosphate + 2 H(+)</text>
        <dbReference type="Rhea" id="RHEA:18029"/>
        <dbReference type="ChEBI" id="CHEBI:15378"/>
        <dbReference type="ChEBI" id="CHEBI:17544"/>
        <dbReference type="ChEBI" id="CHEBI:28938"/>
        <dbReference type="ChEBI" id="CHEBI:30616"/>
        <dbReference type="ChEBI" id="CHEBI:43474"/>
        <dbReference type="ChEBI" id="CHEBI:58228"/>
        <dbReference type="ChEBI" id="CHEBI:456216"/>
        <dbReference type="EC" id="6.3.4.16"/>
    </reaction>
</comment>
<comment type="cofactor">
    <cofactor evidence="1">
        <name>Mg(2+)</name>
        <dbReference type="ChEBI" id="CHEBI:18420"/>
    </cofactor>
    <cofactor evidence="1">
        <name>Mn(2+)</name>
        <dbReference type="ChEBI" id="CHEBI:29035"/>
    </cofactor>
    <text evidence="1">Binds 4 Mg(2+) or Mn(2+) ions per subunit.</text>
</comment>
<comment type="pathway">
    <text evidence="1">Amino-acid biosynthesis; L-arginine biosynthesis; carbamoyl phosphate from bicarbonate: step 1/1.</text>
</comment>
<comment type="pathway">
    <text evidence="1">Pyrimidine metabolism; UMP biosynthesis via de novo pathway; (S)-dihydroorotate from bicarbonate: step 1/3.</text>
</comment>
<comment type="subunit">
    <text evidence="1">Composed of two chains; the small (or glutamine) chain promotes the hydrolysis of glutamine to ammonia, which is used by the large (or ammonia) chain to synthesize carbamoyl phosphate. Tetramer of heterodimers (alpha,beta)4.</text>
</comment>
<comment type="domain">
    <text evidence="1">The large subunit is composed of 2 ATP-grasp domains that are involved in binding the 2 ATP molecules needed for carbamoyl phosphate synthesis. The N-terminal ATP-grasp domain (referred to as the carboxyphosphate synthetic component) catalyzes the ATP-dependent phosphorylation of hydrogencarbonate to carboxyphosphate and the subsequent nucleophilic attack by ammonia to form a carbamate intermediate. The C-terminal ATP-grasp domain (referred to as the carbamoyl phosphate synthetic component) then catalyzes the phosphorylation of carbamate with the second ATP to form the end product carbamoyl phosphate. The reactive and unstable enzyme intermediates are sequentially channeled from one active site to the next through the interior of the protein over a distance of at least 96 A.</text>
</comment>
<comment type="similarity">
    <text evidence="1">Belongs to the CarB family.</text>
</comment>
<feature type="chain" id="PRO_1000085565" description="Carbamoyl phosphate synthase large chain">
    <location>
        <begin position="1"/>
        <end position="1059"/>
    </location>
</feature>
<feature type="domain" description="ATP-grasp 1" evidence="1">
    <location>
        <begin position="133"/>
        <end position="327"/>
    </location>
</feature>
<feature type="domain" description="ATP-grasp 2" evidence="1">
    <location>
        <begin position="671"/>
        <end position="861"/>
    </location>
</feature>
<feature type="domain" description="MGS-like" evidence="1">
    <location>
        <begin position="930"/>
        <end position="1059"/>
    </location>
</feature>
<feature type="region of interest" description="Carboxyphosphate synthetic domain" evidence="1">
    <location>
        <begin position="1"/>
        <end position="401"/>
    </location>
</feature>
<feature type="region of interest" description="Oligomerization domain" evidence="1">
    <location>
        <begin position="402"/>
        <end position="546"/>
    </location>
</feature>
<feature type="region of interest" description="Carbamoyl phosphate synthetic domain" evidence="1">
    <location>
        <begin position="547"/>
        <end position="929"/>
    </location>
</feature>
<feature type="region of interest" description="Allosteric domain" evidence="1">
    <location>
        <begin position="930"/>
        <end position="1059"/>
    </location>
</feature>
<feature type="binding site" evidence="1">
    <location>
        <position position="129"/>
    </location>
    <ligand>
        <name>ATP</name>
        <dbReference type="ChEBI" id="CHEBI:30616"/>
        <label>1</label>
    </ligand>
</feature>
<feature type="binding site" evidence="1">
    <location>
        <position position="169"/>
    </location>
    <ligand>
        <name>ATP</name>
        <dbReference type="ChEBI" id="CHEBI:30616"/>
        <label>1</label>
    </ligand>
</feature>
<feature type="binding site" evidence="1">
    <location>
        <position position="175"/>
    </location>
    <ligand>
        <name>ATP</name>
        <dbReference type="ChEBI" id="CHEBI:30616"/>
        <label>1</label>
    </ligand>
</feature>
<feature type="binding site" evidence="1">
    <location>
        <position position="176"/>
    </location>
    <ligand>
        <name>ATP</name>
        <dbReference type="ChEBI" id="CHEBI:30616"/>
        <label>1</label>
    </ligand>
</feature>
<feature type="binding site" evidence="1">
    <location>
        <position position="208"/>
    </location>
    <ligand>
        <name>ATP</name>
        <dbReference type="ChEBI" id="CHEBI:30616"/>
        <label>1</label>
    </ligand>
</feature>
<feature type="binding site" evidence="1">
    <location>
        <position position="210"/>
    </location>
    <ligand>
        <name>ATP</name>
        <dbReference type="ChEBI" id="CHEBI:30616"/>
        <label>1</label>
    </ligand>
</feature>
<feature type="binding site" evidence="1">
    <location>
        <position position="215"/>
    </location>
    <ligand>
        <name>ATP</name>
        <dbReference type="ChEBI" id="CHEBI:30616"/>
        <label>1</label>
    </ligand>
</feature>
<feature type="binding site" evidence="1">
    <location>
        <position position="241"/>
    </location>
    <ligand>
        <name>ATP</name>
        <dbReference type="ChEBI" id="CHEBI:30616"/>
        <label>1</label>
    </ligand>
</feature>
<feature type="binding site" evidence="1">
    <location>
        <position position="242"/>
    </location>
    <ligand>
        <name>ATP</name>
        <dbReference type="ChEBI" id="CHEBI:30616"/>
        <label>1</label>
    </ligand>
</feature>
<feature type="binding site" evidence="1">
    <location>
        <position position="243"/>
    </location>
    <ligand>
        <name>ATP</name>
        <dbReference type="ChEBI" id="CHEBI:30616"/>
        <label>1</label>
    </ligand>
</feature>
<feature type="binding site" evidence="1">
    <location>
        <position position="284"/>
    </location>
    <ligand>
        <name>ATP</name>
        <dbReference type="ChEBI" id="CHEBI:30616"/>
        <label>1</label>
    </ligand>
</feature>
<feature type="binding site" evidence="1">
    <location>
        <position position="284"/>
    </location>
    <ligand>
        <name>Mg(2+)</name>
        <dbReference type="ChEBI" id="CHEBI:18420"/>
        <label>1</label>
    </ligand>
</feature>
<feature type="binding site" evidence="1">
    <location>
        <position position="284"/>
    </location>
    <ligand>
        <name>Mn(2+)</name>
        <dbReference type="ChEBI" id="CHEBI:29035"/>
        <label>1</label>
    </ligand>
</feature>
<feature type="binding site" evidence="1">
    <location>
        <position position="298"/>
    </location>
    <ligand>
        <name>ATP</name>
        <dbReference type="ChEBI" id="CHEBI:30616"/>
        <label>1</label>
    </ligand>
</feature>
<feature type="binding site" evidence="1">
    <location>
        <position position="298"/>
    </location>
    <ligand>
        <name>Mg(2+)</name>
        <dbReference type="ChEBI" id="CHEBI:18420"/>
        <label>1</label>
    </ligand>
</feature>
<feature type="binding site" evidence="1">
    <location>
        <position position="298"/>
    </location>
    <ligand>
        <name>Mg(2+)</name>
        <dbReference type="ChEBI" id="CHEBI:18420"/>
        <label>2</label>
    </ligand>
</feature>
<feature type="binding site" evidence="1">
    <location>
        <position position="298"/>
    </location>
    <ligand>
        <name>Mn(2+)</name>
        <dbReference type="ChEBI" id="CHEBI:29035"/>
        <label>1</label>
    </ligand>
</feature>
<feature type="binding site" evidence="1">
    <location>
        <position position="298"/>
    </location>
    <ligand>
        <name>Mn(2+)</name>
        <dbReference type="ChEBI" id="CHEBI:29035"/>
        <label>2</label>
    </ligand>
</feature>
<feature type="binding site" evidence="1">
    <location>
        <position position="300"/>
    </location>
    <ligand>
        <name>Mg(2+)</name>
        <dbReference type="ChEBI" id="CHEBI:18420"/>
        <label>2</label>
    </ligand>
</feature>
<feature type="binding site" evidence="1">
    <location>
        <position position="300"/>
    </location>
    <ligand>
        <name>Mn(2+)</name>
        <dbReference type="ChEBI" id="CHEBI:29035"/>
        <label>2</label>
    </ligand>
</feature>
<feature type="binding site" evidence="1">
    <location>
        <position position="707"/>
    </location>
    <ligand>
        <name>ATP</name>
        <dbReference type="ChEBI" id="CHEBI:30616"/>
        <label>2</label>
    </ligand>
</feature>
<feature type="binding site" evidence="1">
    <location>
        <position position="746"/>
    </location>
    <ligand>
        <name>ATP</name>
        <dbReference type="ChEBI" id="CHEBI:30616"/>
        <label>2</label>
    </ligand>
</feature>
<feature type="binding site" evidence="1">
    <location>
        <position position="748"/>
    </location>
    <ligand>
        <name>ATP</name>
        <dbReference type="ChEBI" id="CHEBI:30616"/>
        <label>2</label>
    </ligand>
</feature>
<feature type="binding site" evidence="1">
    <location>
        <position position="752"/>
    </location>
    <ligand>
        <name>ATP</name>
        <dbReference type="ChEBI" id="CHEBI:30616"/>
        <label>2</label>
    </ligand>
</feature>
<feature type="binding site" evidence="1">
    <location>
        <position position="777"/>
    </location>
    <ligand>
        <name>ATP</name>
        <dbReference type="ChEBI" id="CHEBI:30616"/>
        <label>2</label>
    </ligand>
</feature>
<feature type="binding site" evidence="1">
    <location>
        <position position="778"/>
    </location>
    <ligand>
        <name>ATP</name>
        <dbReference type="ChEBI" id="CHEBI:30616"/>
        <label>2</label>
    </ligand>
</feature>
<feature type="binding site" evidence="1">
    <location>
        <position position="779"/>
    </location>
    <ligand>
        <name>ATP</name>
        <dbReference type="ChEBI" id="CHEBI:30616"/>
        <label>2</label>
    </ligand>
</feature>
<feature type="binding site" evidence="1">
    <location>
        <position position="780"/>
    </location>
    <ligand>
        <name>ATP</name>
        <dbReference type="ChEBI" id="CHEBI:30616"/>
        <label>2</label>
    </ligand>
</feature>
<feature type="binding site" evidence="1">
    <location>
        <position position="820"/>
    </location>
    <ligand>
        <name>ATP</name>
        <dbReference type="ChEBI" id="CHEBI:30616"/>
        <label>2</label>
    </ligand>
</feature>
<feature type="binding site" evidence="1">
    <location>
        <position position="820"/>
    </location>
    <ligand>
        <name>Mg(2+)</name>
        <dbReference type="ChEBI" id="CHEBI:18420"/>
        <label>3</label>
    </ligand>
</feature>
<feature type="binding site" evidence="1">
    <location>
        <position position="820"/>
    </location>
    <ligand>
        <name>Mn(2+)</name>
        <dbReference type="ChEBI" id="CHEBI:29035"/>
        <label>3</label>
    </ligand>
</feature>
<feature type="binding site" evidence="1">
    <location>
        <position position="832"/>
    </location>
    <ligand>
        <name>ATP</name>
        <dbReference type="ChEBI" id="CHEBI:30616"/>
        <label>2</label>
    </ligand>
</feature>
<feature type="binding site" evidence="1">
    <location>
        <position position="832"/>
    </location>
    <ligand>
        <name>Mg(2+)</name>
        <dbReference type="ChEBI" id="CHEBI:18420"/>
        <label>3</label>
    </ligand>
</feature>
<feature type="binding site" evidence="1">
    <location>
        <position position="832"/>
    </location>
    <ligand>
        <name>Mg(2+)</name>
        <dbReference type="ChEBI" id="CHEBI:18420"/>
        <label>4</label>
    </ligand>
</feature>
<feature type="binding site" evidence="1">
    <location>
        <position position="832"/>
    </location>
    <ligand>
        <name>Mn(2+)</name>
        <dbReference type="ChEBI" id="CHEBI:29035"/>
        <label>3</label>
    </ligand>
</feature>
<feature type="binding site" evidence="1">
    <location>
        <position position="832"/>
    </location>
    <ligand>
        <name>Mn(2+)</name>
        <dbReference type="ChEBI" id="CHEBI:29035"/>
        <label>4</label>
    </ligand>
</feature>
<feature type="binding site" evidence="1">
    <location>
        <position position="834"/>
    </location>
    <ligand>
        <name>Mg(2+)</name>
        <dbReference type="ChEBI" id="CHEBI:18420"/>
        <label>4</label>
    </ligand>
</feature>
<feature type="binding site" evidence="1">
    <location>
        <position position="834"/>
    </location>
    <ligand>
        <name>Mn(2+)</name>
        <dbReference type="ChEBI" id="CHEBI:29035"/>
        <label>4</label>
    </ligand>
</feature>
<organism>
    <name type="scientific">Streptococcus gordonii (strain Challis / ATCC 35105 / BCRC 15272 / CH1 / DL1 / V288)</name>
    <dbReference type="NCBI Taxonomy" id="467705"/>
    <lineage>
        <taxon>Bacteria</taxon>
        <taxon>Bacillati</taxon>
        <taxon>Bacillota</taxon>
        <taxon>Bacilli</taxon>
        <taxon>Lactobacillales</taxon>
        <taxon>Streptococcaceae</taxon>
        <taxon>Streptococcus</taxon>
    </lineage>
</organism>